<evidence type="ECO:0000250" key="1">
    <source>
        <dbReference type="UniProtKB" id="P56757"/>
    </source>
</evidence>
<evidence type="ECO:0000255" key="2">
    <source>
        <dbReference type="HAMAP-Rule" id="MF_01346"/>
    </source>
</evidence>
<keyword id="KW-0066">ATP synthesis</keyword>
<keyword id="KW-0067">ATP-binding</keyword>
<keyword id="KW-0139">CF(1)</keyword>
<keyword id="KW-0150">Chloroplast</keyword>
<keyword id="KW-0375">Hydrogen ion transport</keyword>
<keyword id="KW-0406">Ion transport</keyword>
<keyword id="KW-0472">Membrane</keyword>
<keyword id="KW-0547">Nucleotide-binding</keyword>
<keyword id="KW-0597">Phosphoprotein</keyword>
<keyword id="KW-0934">Plastid</keyword>
<keyword id="KW-0793">Thylakoid</keyword>
<keyword id="KW-1278">Translocase</keyword>
<keyword id="KW-0813">Transport</keyword>
<organism>
    <name type="scientific">Capsella bursa-pastoris</name>
    <name type="common">Shepherd's purse</name>
    <name type="synonym">Thlaspi bursa-pastoris</name>
    <dbReference type="NCBI Taxonomy" id="3719"/>
    <lineage>
        <taxon>Eukaryota</taxon>
        <taxon>Viridiplantae</taxon>
        <taxon>Streptophyta</taxon>
        <taxon>Embryophyta</taxon>
        <taxon>Tracheophyta</taxon>
        <taxon>Spermatophyta</taxon>
        <taxon>Magnoliopsida</taxon>
        <taxon>eudicotyledons</taxon>
        <taxon>Gunneridae</taxon>
        <taxon>Pentapetalae</taxon>
        <taxon>rosids</taxon>
        <taxon>malvids</taxon>
        <taxon>Brassicales</taxon>
        <taxon>Brassicaceae</taxon>
        <taxon>Camelineae</taxon>
        <taxon>Capsella</taxon>
    </lineage>
</organism>
<dbReference type="EC" id="7.1.2.2" evidence="2"/>
<dbReference type="EMBL" id="AP009371">
    <property type="protein sequence ID" value="BAF50182.1"/>
    <property type="molecule type" value="Genomic_DNA"/>
</dbReference>
<dbReference type="RefSeq" id="YP_001123358.1">
    <property type="nucleotide sequence ID" value="NC_009270.1"/>
</dbReference>
<dbReference type="SMR" id="A4QKH7"/>
<dbReference type="GeneID" id="4961688"/>
<dbReference type="GO" id="GO:0009535">
    <property type="term" value="C:chloroplast thylakoid membrane"/>
    <property type="evidence" value="ECO:0007669"/>
    <property type="project" value="UniProtKB-SubCell"/>
</dbReference>
<dbReference type="GO" id="GO:0045259">
    <property type="term" value="C:proton-transporting ATP synthase complex"/>
    <property type="evidence" value="ECO:0007669"/>
    <property type="project" value="UniProtKB-KW"/>
</dbReference>
<dbReference type="GO" id="GO:0043531">
    <property type="term" value="F:ADP binding"/>
    <property type="evidence" value="ECO:0007669"/>
    <property type="project" value="TreeGrafter"/>
</dbReference>
<dbReference type="GO" id="GO:0005524">
    <property type="term" value="F:ATP binding"/>
    <property type="evidence" value="ECO:0007669"/>
    <property type="project" value="UniProtKB-UniRule"/>
</dbReference>
<dbReference type="GO" id="GO:0046933">
    <property type="term" value="F:proton-transporting ATP synthase activity, rotational mechanism"/>
    <property type="evidence" value="ECO:0007669"/>
    <property type="project" value="UniProtKB-UniRule"/>
</dbReference>
<dbReference type="CDD" id="cd18113">
    <property type="entry name" value="ATP-synt_F1_alpha_C"/>
    <property type="match status" value="1"/>
</dbReference>
<dbReference type="CDD" id="cd18116">
    <property type="entry name" value="ATP-synt_F1_alpha_N"/>
    <property type="match status" value="1"/>
</dbReference>
<dbReference type="CDD" id="cd01132">
    <property type="entry name" value="F1-ATPase_alpha_CD"/>
    <property type="match status" value="1"/>
</dbReference>
<dbReference type="FunFam" id="1.20.150.20:FF:000001">
    <property type="entry name" value="ATP synthase subunit alpha"/>
    <property type="match status" value="1"/>
</dbReference>
<dbReference type="FunFam" id="2.40.30.20:FF:000001">
    <property type="entry name" value="ATP synthase subunit alpha"/>
    <property type="match status" value="1"/>
</dbReference>
<dbReference type="FunFam" id="3.40.50.300:FF:000002">
    <property type="entry name" value="ATP synthase subunit alpha"/>
    <property type="match status" value="1"/>
</dbReference>
<dbReference type="Gene3D" id="2.40.30.20">
    <property type="match status" value="1"/>
</dbReference>
<dbReference type="Gene3D" id="1.20.150.20">
    <property type="entry name" value="ATP synthase alpha/beta chain, C-terminal domain"/>
    <property type="match status" value="1"/>
</dbReference>
<dbReference type="Gene3D" id="3.40.50.300">
    <property type="entry name" value="P-loop containing nucleotide triphosphate hydrolases"/>
    <property type="match status" value="1"/>
</dbReference>
<dbReference type="HAMAP" id="MF_01346">
    <property type="entry name" value="ATP_synth_alpha_bact"/>
    <property type="match status" value="1"/>
</dbReference>
<dbReference type="InterPro" id="IPR023366">
    <property type="entry name" value="ATP_synth_asu-like_sf"/>
</dbReference>
<dbReference type="InterPro" id="IPR000793">
    <property type="entry name" value="ATP_synth_asu_C"/>
</dbReference>
<dbReference type="InterPro" id="IPR038376">
    <property type="entry name" value="ATP_synth_asu_C_sf"/>
</dbReference>
<dbReference type="InterPro" id="IPR033732">
    <property type="entry name" value="ATP_synth_F1_a_nt-bd_dom"/>
</dbReference>
<dbReference type="InterPro" id="IPR005294">
    <property type="entry name" value="ATP_synth_F1_asu"/>
</dbReference>
<dbReference type="InterPro" id="IPR020003">
    <property type="entry name" value="ATPase_a/bsu_AS"/>
</dbReference>
<dbReference type="InterPro" id="IPR004100">
    <property type="entry name" value="ATPase_F1/V1/A1_a/bsu_N"/>
</dbReference>
<dbReference type="InterPro" id="IPR036121">
    <property type="entry name" value="ATPase_F1/V1/A1_a/bsu_N_sf"/>
</dbReference>
<dbReference type="InterPro" id="IPR000194">
    <property type="entry name" value="ATPase_F1/V1/A1_a/bsu_nucl-bd"/>
</dbReference>
<dbReference type="InterPro" id="IPR027417">
    <property type="entry name" value="P-loop_NTPase"/>
</dbReference>
<dbReference type="NCBIfam" id="TIGR00962">
    <property type="entry name" value="atpA"/>
    <property type="match status" value="1"/>
</dbReference>
<dbReference type="NCBIfam" id="NF009884">
    <property type="entry name" value="PRK13343.1"/>
    <property type="match status" value="1"/>
</dbReference>
<dbReference type="PANTHER" id="PTHR48082">
    <property type="entry name" value="ATP SYNTHASE SUBUNIT ALPHA, MITOCHONDRIAL"/>
    <property type="match status" value="1"/>
</dbReference>
<dbReference type="PANTHER" id="PTHR48082:SF2">
    <property type="entry name" value="ATP SYNTHASE SUBUNIT ALPHA, MITOCHONDRIAL"/>
    <property type="match status" value="1"/>
</dbReference>
<dbReference type="Pfam" id="PF00006">
    <property type="entry name" value="ATP-synt_ab"/>
    <property type="match status" value="1"/>
</dbReference>
<dbReference type="Pfam" id="PF00306">
    <property type="entry name" value="ATP-synt_ab_C"/>
    <property type="match status" value="1"/>
</dbReference>
<dbReference type="Pfam" id="PF02874">
    <property type="entry name" value="ATP-synt_ab_N"/>
    <property type="match status" value="1"/>
</dbReference>
<dbReference type="PIRSF" id="PIRSF039088">
    <property type="entry name" value="F_ATPase_subunit_alpha"/>
    <property type="match status" value="1"/>
</dbReference>
<dbReference type="SUPFAM" id="SSF47917">
    <property type="entry name" value="C-terminal domain of alpha and beta subunits of F1 ATP synthase"/>
    <property type="match status" value="1"/>
</dbReference>
<dbReference type="SUPFAM" id="SSF50615">
    <property type="entry name" value="N-terminal domain of alpha and beta subunits of F1 ATP synthase"/>
    <property type="match status" value="1"/>
</dbReference>
<dbReference type="SUPFAM" id="SSF52540">
    <property type="entry name" value="P-loop containing nucleoside triphosphate hydrolases"/>
    <property type="match status" value="1"/>
</dbReference>
<dbReference type="PROSITE" id="PS00152">
    <property type="entry name" value="ATPASE_ALPHA_BETA"/>
    <property type="match status" value="1"/>
</dbReference>
<name>ATPA_CAPBU</name>
<accession>A4QKH7</accession>
<geneLocation type="chloroplast"/>
<feature type="chain" id="PRO_0000339074" description="ATP synthase subunit alpha, chloroplastic">
    <location>
        <begin position="1"/>
        <end position="507"/>
    </location>
</feature>
<feature type="binding site" evidence="2">
    <location>
        <begin position="170"/>
        <end position="177"/>
    </location>
    <ligand>
        <name>ATP</name>
        <dbReference type="ChEBI" id="CHEBI:30616"/>
    </ligand>
</feature>
<feature type="site" description="Required for activity" evidence="2">
    <location>
        <position position="363"/>
    </location>
</feature>
<feature type="modified residue" description="Phosphothreonine" evidence="1">
    <location>
        <position position="257"/>
    </location>
</feature>
<proteinExistence type="inferred from homology"/>
<sequence length="507" mass="55282">MVTIRADEISNIIRERIEQYNREVTIVNTGTVLQVGDGIARIYGLDEVMAGELVEFDEGTIGIALNLESNNVGVVLMGDGLMIQEGSSVKATGKIAQIPVSEAYLGRVINALANPIDGRGKISASESRLIESPAPGIISRRSVYEPLQTGLIAIDSMIPIGRGQRELIIGDRQTGKTAVATDTILNQQGQNVICVYVAIGQKASSVAQVVTSLQERGAMEYTIVVAETADAPATLQYLAPYTGAALAEYFMYREQHTLIIYDDLSKQAQAYRQMSLLLRRPPGREAYPGDVFYLHSRLLERAAKLSSQLGEGSMTALPIVETQSGDVSAYIPTNVISITDGQIFLSADLFNAGIRPAINVGISVSRVGSAAQIKAMKQVAGKLKLELAQFAELEAFAQFSSDLDKATQNQLARGQRLRELLKQSQSAPLTVEEQIMTIYTGTNGYLDGLEIGQVRKFLVQLRTYLKTNKPQFQEIIASTKTLTAEAESFLKEGIQEQLERFLLQEKV</sequence>
<comment type="function">
    <text evidence="2">Produces ATP from ADP in the presence of a proton gradient across the membrane. The alpha chain is a regulatory subunit.</text>
</comment>
<comment type="catalytic activity">
    <reaction evidence="2">
        <text>ATP + H2O + 4 H(+)(in) = ADP + phosphate + 5 H(+)(out)</text>
        <dbReference type="Rhea" id="RHEA:57720"/>
        <dbReference type="ChEBI" id="CHEBI:15377"/>
        <dbReference type="ChEBI" id="CHEBI:15378"/>
        <dbReference type="ChEBI" id="CHEBI:30616"/>
        <dbReference type="ChEBI" id="CHEBI:43474"/>
        <dbReference type="ChEBI" id="CHEBI:456216"/>
        <dbReference type="EC" id="7.1.2.2"/>
    </reaction>
</comment>
<comment type="subunit">
    <text evidence="2">F-type ATPases have 2 components, CF(1) - the catalytic core - and CF(0) - the membrane proton channel. CF(1) has five subunits: alpha(3), beta(3), gamma(1), delta(1), epsilon(1). CF(0) has four main subunits: a, b, b' and c.</text>
</comment>
<comment type="subcellular location">
    <subcellularLocation>
        <location evidence="2">Plastid</location>
        <location evidence="2">Chloroplast thylakoid membrane</location>
        <topology evidence="2">Peripheral membrane protein</topology>
    </subcellularLocation>
</comment>
<comment type="similarity">
    <text evidence="2">Belongs to the ATPase alpha/beta chains family.</text>
</comment>
<gene>
    <name evidence="2" type="primary">atpA</name>
</gene>
<protein>
    <recommendedName>
        <fullName evidence="2">ATP synthase subunit alpha, chloroplastic</fullName>
        <ecNumber evidence="2">7.1.2.2</ecNumber>
    </recommendedName>
    <alternativeName>
        <fullName evidence="2">ATP synthase F1 sector subunit alpha</fullName>
    </alternativeName>
    <alternativeName>
        <fullName evidence="2">F-ATPase subunit alpha</fullName>
    </alternativeName>
</protein>
<reference key="1">
    <citation type="submission" date="2007-03" db="EMBL/GenBank/DDBJ databases">
        <title>Sequencing analysis of Capsella bursa-pastoris JO22 chloroplast DNA.</title>
        <authorList>
            <person name="Hosouchi T."/>
            <person name="Tsuruoka H."/>
            <person name="Kotani H."/>
        </authorList>
    </citation>
    <scope>NUCLEOTIDE SEQUENCE [LARGE SCALE GENOMIC DNA]</scope>
</reference>